<reference key="1">
    <citation type="journal article" date="2009" name="J. Bacteriol.">
        <title>Genomic sequencing reveals regulatory mutations and recombinational events in the widely used MC4100 lineage of Escherichia coli K-12.</title>
        <authorList>
            <person name="Ferenci T."/>
            <person name="Zhou Z."/>
            <person name="Betteridge T."/>
            <person name="Ren Y."/>
            <person name="Liu Y."/>
            <person name="Feng L."/>
            <person name="Reeves P.R."/>
            <person name="Wang L."/>
        </authorList>
    </citation>
    <scope>NUCLEOTIDE SEQUENCE [LARGE SCALE GENOMIC DNA]</scope>
    <source>
        <strain>K12 / MC4100 / BW2952</strain>
    </source>
</reference>
<name>YFBU_ECOBW</name>
<evidence type="ECO:0000255" key="1">
    <source>
        <dbReference type="HAMAP-Rule" id="MF_00762"/>
    </source>
</evidence>
<feature type="chain" id="PRO_1000212883" description="UPF0304 protein YfbU">
    <location>
        <begin position="1"/>
        <end position="164"/>
    </location>
</feature>
<proteinExistence type="inferred from homology"/>
<dbReference type="EMBL" id="CP001396">
    <property type="protein sequence ID" value="ACR62345.1"/>
    <property type="molecule type" value="Genomic_DNA"/>
</dbReference>
<dbReference type="RefSeq" id="WP_000426124.1">
    <property type="nucleotide sequence ID" value="NC_012759.1"/>
</dbReference>
<dbReference type="SMR" id="C4ZVI7"/>
<dbReference type="KEGG" id="ebw:BWG_2068"/>
<dbReference type="HOGENOM" id="CLU_101021_1_0_6"/>
<dbReference type="FunFam" id="1.10.3190.10:FF:000001">
    <property type="entry name" value="UPF0304 protein YfbU"/>
    <property type="match status" value="1"/>
</dbReference>
<dbReference type="Gene3D" id="1.10.287.680">
    <property type="entry name" value="Helix hairpin bin"/>
    <property type="match status" value="1"/>
</dbReference>
<dbReference type="Gene3D" id="1.10.3190.10">
    <property type="entry name" value="yfbu gene product, domain 2"/>
    <property type="match status" value="1"/>
</dbReference>
<dbReference type="HAMAP" id="MF_00762">
    <property type="entry name" value="UPF0304"/>
    <property type="match status" value="1"/>
</dbReference>
<dbReference type="InterPro" id="IPR005587">
    <property type="entry name" value="UPF0304_YfbU"/>
</dbReference>
<dbReference type="InterPro" id="IPR023146">
    <property type="entry name" value="YfbU_alpha-helical_sf"/>
</dbReference>
<dbReference type="InterPro" id="IPR023145">
    <property type="entry name" value="YfbU_helix-hairpin_sf"/>
</dbReference>
<dbReference type="NCBIfam" id="NF003936">
    <property type="entry name" value="PRK05445.1"/>
    <property type="match status" value="1"/>
</dbReference>
<dbReference type="Pfam" id="PF03887">
    <property type="entry name" value="YfbU"/>
    <property type="match status" value="1"/>
</dbReference>
<dbReference type="PIRSF" id="PIRSF006272">
    <property type="entry name" value="UCP006272"/>
    <property type="match status" value="1"/>
</dbReference>
<dbReference type="SUPFAM" id="SSF116960">
    <property type="entry name" value="YfbU-like"/>
    <property type="match status" value="1"/>
</dbReference>
<sequence>MEMTNAQRLILSNQYKMMTMLDPANAERYRRLQTIIERGYGLQMRELDREFGELKEETCRTIIDIMEMYHALHVSWSNLQDQQSIDERRVTFLGFDAATEARYLGYVRFMVNVEGRYTHFDAGTHGFNAQTPMWEKYQRMLNVWHACPRQYHLSANEINQIINA</sequence>
<gene>
    <name evidence="1" type="primary">yfbU</name>
    <name type="ordered locus">BWG_2068</name>
</gene>
<protein>
    <recommendedName>
        <fullName evidence="1">UPF0304 protein YfbU</fullName>
    </recommendedName>
</protein>
<organism>
    <name type="scientific">Escherichia coli (strain K12 / MC4100 / BW2952)</name>
    <dbReference type="NCBI Taxonomy" id="595496"/>
    <lineage>
        <taxon>Bacteria</taxon>
        <taxon>Pseudomonadati</taxon>
        <taxon>Pseudomonadota</taxon>
        <taxon>Gammaproteobacteria</taxon>
        <taxon>Enterobacterales</taxon>
        <taxon>Enterobacteriaceae</taxon>
        <taxon>Escherichia</taxon>
    </lineage>
</organism>
<accession>C4ZVI7</accession>
<comment type="similarity">
    <text evidence="1">Belongs to the UPF0304 family.</text>
</comment>